<organism>
    <name type="scientific">Yersinia pseudotuberculosis serotype O:3 (strain YPIII)</name>
    <dbReference type="NCBI Taxonomy" id="502800"/>
    <lineage>
        <taxon>Bacteria</taxon>
        <taxon>Pseudomonadati</taxon>
        <taxon>Pseudomonadota</taxon>
        <taxon>Gammaproteobacteria</taxon>
        <taxon>Enterobacterales</taxon>
        <taxon>Yersiniaceae</taxon>
        <taxon>Yersinia</taxon>
    </lineage>
</organism>
<keyword id="KW-0067">ATP-binding</keyword>
<keyword id="KW-0963">Cytoplasm</keyword>
<keyword id="KW-0547">Nucleotide-binding</keyword>
<keyword id="KW-0548">Nucleotidyltransferase</keyword>
<keyword id="KW-0808">Transferase</keyword>
<keyword id="KW-0819">tRNA processing</keyword>
<accession>B1JJI2</accession>
<gene>
    <name evidence="1" type="primary">tsaC</name>
    <name type="synonym">rimN</name>
    <name type="ordered locus">YPK_0320</name>
</gene>
<dbReference type="EC" id="2.7.7.87" evidence="1"/>
<dbReference type="EMBL" id="CP000950">
    <property type="protein sequence ID" value="ACA66633.1"/>
    <property type="molecule type" value="Genomic_DNA"/>
</dbReference>
<dbReference type="RefSeq" id="WP_002209025.1">
    <property type="nucleotide sequence ID" value="NZ_CP009792.1"/>
</dbReference>
<dbReference type="SMR" id="B1JJI2"/>
<dbReference type="GeneID" id="57974358"/>
<dbReference type="KEGG" id="ypy:YPK_0320"/>
<dbReference type="PATRIC" id="fig|502800.11.peg.927"/>
<dbReference type="GO" id="GO:0005737">
    <property type="term" value="C:cytoplasm"/>
    <property type="evidence" value="ECO:0007669"/>
    <property type="project" value="UniProtKB-SubCell"/>
</dbReference>
<dbReference type="GO" id="GO:0005524">
    <property type="term" value="F:ATP binding"/>
    <property type="evidence" value="ECO:0007669"/>
    <property type="project" value="UniProtKB-UniRule"/>
</dbReference>
<dbReference type="GO" id="GO:0003725">
    <property type="term" value="F:double-stranded RNA binding"/>
    <property type="evidence" value="ECO:0007669"/>
    <property type="project" value="InterPro"/>
</dbReference>
<dbReference type="GO" id="GO:0061710">
    <property type="term" value="F:L-threonylcarbamoyladenylate synthase"/>
    <property type="evidence" value="ECO:0007669"/>
    <property type="project" value="UniProtKB-EC"/>
</dbReference>
<dbReference type="GO" id="GO:0000049">
    <property type="term" value="F:tRNA binding"/>
    <property type="evidence" value="ECO:0007669"/>
    <property type="project" value="TreeGrafter"/>
</dbReference>
<dbReference type="GO" id="GO:0006450">
    <property type="term" value="P:regulation of translational fidelity"/>
    <property type="evidence" value="ECO:0007669"/>
    <property type="project" value="TreeGrafter"/>
</dbReference>
<dbReference type="GO" id="GO:0002949">
    <property type="term" value="P:tRNA threonylcarbamoyladenosine modification"/>
    <property type="evidence" value="ECO:0007669"/>
    <property type="project" value="UniProtKB-UniRule"/>
</dbReference>
<dbReference type="FunFam" id="3.90.870.10:FF:000004">
    <property type="entry name" value="Threonylcarbamoyl-AMP synthase"/>
    <property type="match status" value="1"/>
</dbReference>
<dbReference type="Gene3D" id="3.90.870.10">
    <property type="entry name" value="DHBP synthase"/>
    <property type="match status" value="1"/>
</dbReference>
<dbReference type="HAMAP" id="MF_01852">
    <property type="entry name" value="TsaC"/>
    <property type="match status" value="1"/>
</dbReference>
<dbReference type="InterPro" id="IPR017945">
    <property type="entry name" value="DHBP_synth_RibB-like_a/b_dom"/>
</dbReference>
<dbReference type="InterPro" id="IPR006070">
    <property type="entry name" value="Sua5-like_dom"/>
</dbReference>
<dbReference type="InterPro" id="IPR023535">
    <property type="entry name" value="TC-AMP_synthase"/>
</dbReference>
<dbReference type="InterPro" id="IPR050156">
    <property type="entry name" value="TC-AMP_synthase_SUA5"/>
</dbReference>
<dbReference type="NCBIfam" id="NF007919">
    <property type="entry name" value="PRK10634.1"/>
    <property type="match status" value="1"/>
</dbReference>
<dbReference type="PANTHER" id="PTHR17490">
    <property type="entry name" value="SUA5"/>
    <property type="match status" value="1"/>
</dbReference>
<dbReference type="PANTHER" id="PTHR17490:SF18">
    <property type="entry name" value="THREONYLCARBAMOYL-AMP SYNTHASE"/>
    <property type="match status" value="1"/>
</dbReference>
<dbReference type="Pfam" id="PF01300">
    <property type="entry name" value="Sua5_yciO_yrdC"/>
    <property type="match status" value="1"/>
</dbReference>
<dbReference type="SUPFAM" id="SSF55821">
    <property type="entry name" value="YrdC/RibB"/>
    <property type="match status" value="1"/>
</dbReference>
<dbReference type="PROSITE" id="PS51163">
    <property type="entry name" value="YRDC"/>
    <property type="match status" value="1"/>
</dbReference>
<proteinExistence type="inferred from homology"/>
<protein>
    <recommendedName>
        <fullName evidence="1">Threonylcarbamoyl-AMP synthase</fullName>
        <shortName evidence="1">TC-AMP synthase</shortName>
        <ecNumber evidence="1">2.7.7.87</ecNumber>
    </recommendedName>
    <alternativeName>
        <fullName evidence="1">L-threonylcarbamoyladenylate synthase</fullName>
    </alternativeName>
    <alternativeName>
        <fullName evidence="1">t(6)A37 threonylcarbamoyladenosine biosynthesis protein TsaC</fullName>
    </alternativeName>
    <alternativeName>
        <fullName evidence="1">tRNA threonylcarbamoyladenosine biosynthesis protein TsaC</fullName>
    </alternativeName>
</protein>
<sequence length="190" mass="21153">MNQQENNFVLADIVRALRQEEVIAYPTEAVFGLGCDPDSEKAVNTLLALKQRPWQKGLILVAANYAQLEPYINDSMLNEIQRETLFSTWPGPITWVIPARVETPQWLTGCFDSLAVRVSNHPLVQQLCAEYGKPLVSTSANLSGHEPCRTEEEVRIQFGPSLPVLSGHVGGRLNPSEIRDALTGKRFRQG</sequence>
<reference key="1">
    <citation type="submission" date="2008-02" db="EMBL/GenBank/DDBJ databases">
        <title>Complete sequence of Yersinia pseudotuberculosis YPIII.</title>
        <authorList>
            <consortium name="US DOE Joint Genome Institute"/>
            <person name="Copeland A."/>
            <person name="Lucas S."/>
            <person name="Lapidus A."/>
            <person name="Glavina del Rio T."/>
            <person name="Dalin E."/>
            <person name="Tice H."/>
            <person name="Bruce D."/>
            <person name="Goodwin L."/>
            <person name="Pitluck S."/>
            <person name="Munk A.C."/>
            <person name="Brettin T."/>
            <person name="Detter J.C."/>
            <person name="Han C."/>
            <person name="Tapia R."/>
            <person name="Schmutz J."/>
            <person name="Larimer F."/>
            <person name="Land M."/>
            <person name="Hauser L."/>
            <person name="Challacombe J.F."/>
            <person name="Green L."/>
            <person name="Lindler L.E."/>
            <person name="Nikolich M.P."/>
            <person name="Richardson P."/>
        </authorList>
    </citation>
    <scope>NUCLEOTIDE SEQUENCE [LARGE SCALE GENOMIC DNA]</scope>
    <source>
        <strain>YPIII</strain>
    </source>
</reference>
<name>TSAC_YERPY</name>
<evidence type="ECO:0000255" key="1">
    <source>
        <dbReference type="HAMAP-Rule" id="MF_01852"/>
    </source>
</evidence>
<comment type="function">
    <text evidence="1">Required for the formation of a threonylcarbamoyl group on adenosine at position 37 (t(6)A37) in tRNAs that read codons beginning with adenine. Catalyzes the conversion of L-threonine, HCO(3)(-)/CO(2) and ATP to give threonylcarbamoyl-AMP (TC-AMP) as the acyladenylate intermediate, with the release of diphosphate.</text>
</comment>
<comment type="catalytic activity">
    <reaction evidence="1">
        <text>L-threonine + hydrogencarbonate + ATP = L-threonylcarbamoyladenylate + diphosphate + H2O</text>
        <dbReference type="Rhea" id="RHEA:36407"/>
        <dbReference type="ChEBI" id="CHEBI:15377"/>
        <dbReference type="ChEBI" id="CHEBI:17544"/>
        <dbReference type="ChEBI" id="CHEBI:30616"/>
        <dbReference type="ChEBI" id="CHEBI:33019"/>
        <dbReference type="ChEBI" id="CHEBI:57926"/>
        <dbReference type="ChEBI" id="CHEBI:73682"/>
        <dbReference type="EC" id="2.7.7.87"/>
    </reaction>
</comment>
<comment type="subcellular location">
    <subcellularLocation>
        <location evidence="1">Cytoplasm</location>
    </subcellularLocation>
</comment>
<comment type="similarity">
    <text evidence="1">Belongs to the SUA5 family. TsaC subfamily.</text>
</comment>
<feature type="chain" id="PRO_0000353030" description="Threonylcarbamoyl-AMP synthase">
    <location>
        <begin position="1"/>
        <end position="190"/>
    </location>
</feature>
<feature type="domain" description="YrdC-like" evidence="1">
    <location>
        <begin position="7"/>
        <end position="190"/>
    </location>
</feature>